<evidence type="ECO:0000255" key="1">
    <source>
        <dbReference type="HAMAP-Rule" id="MF_00529"/>
    </source>
</evidence>
<feature type="chain" id="PRO_1000211776" description="Nitrogenase-stabilizing/protective protein NifW">
    <location>
        <begin position="1"/>
        <end position="115"/>
    </location>
</feature>
<accession>C1DH23</accession>
<keyword id="KW-0535">Nitrogen fixation</keyword>
<name>NIFW_AZOVD</name>
<sequence length="115" mass="13418">MTVQPFSPDSDLTLDEAMDELVSAEDFLEFFGVPFDQDVVHVNRLHIMQRYHDYLSKAGDLDEHDDQARYAVFQKLLARAYLDFVESDALTEKVFKVFRMHEPQKTFVSIDQLLS</sequence>
<gene>
    <name evidence="1" type="primary">nifW</name>
    <name type="ordered locus">Avin_01670</name>
</gene>
<dbReference type="EMBL" id="CP001157">
    <property type="protein sequence ID" value="ACO76430.1"/>
    <property type="molecule type" value="Genomic_DNA"/>
</dbReference>
<dbReference type="RefSeq" id="WP_012698858.1">
    <property type="nucleotide sequence ID" value="NC_012560.1"/>
</dbReference>
<dbReference type="SMR" id="C1DH23"/>
<dbReference type="STRING" id="322710.Avin_01670"/>
<dbReference type="EnsemblBacteria" id="ACO76430">
    <property type="protein sequence ID" value="ACO76430"/>
    <property type="gene ID" value="Avin_01670"/>
</dbReference>
<dbReference type="GeneID" id="88183631"/>
<dbReference type="KEGG" id="avn:Avin_01670"/>
<dbReference type="eggNOG" id="ENOG50330W8">
    <property type="taxonomic scope" value="Bacteria"/>
</dbReference>
<dbReference type="HOGENOM" id="CLU_145318_1_0_6"/>
<dbReference type="OrthoDB" id="9811868at2"/>
<dbReference type="Proteomes" id="UP000002424">
    <property type="component" value="Chromosome"/>
</dbReference>
<dbReference type="GO" id="GO:0009399">
    <property type="term" value="P:nitrogen fixation"/>
    <property type="evidence" value="ECO:0007669"/>
    <property type="project" value="UniProtKB-UniRule"/>
</dbReference>
<dbReference type="HAMAP" id="MF_00529">
    <property type="entry name" value="NifW"/>
    <property type="match status" value="1"/>
</dbReference>
<dbReference type="InterPro" id="IPR004893">
    <property type="entry name" value="NifW"/>
</dbReference>
<dbReference type="Pfam" id="PF03206">
    <property type="entry name" value="NifW"/>
    <property type="match status" value="1"/>
</dbReference>
<dbReference type="PIRSF" id="PIRSF005790">
    <property type="entry name" value="NifW"/>
    <property type="match status" value="1"/>
</dbReference>
<proteinExistence type="inferred from homology"/>
<comment type="function">
    <text evidence="1">May protect the nitrogenase Fe-Mo protein from oxidative damage.</text>
</comment>
<comment type="subunit">
    <text evidence="1">Homotrimer; associates with NifD.</text>
</comment>
<comment type="similarity">
    <text evidence="1">Belongs to the NifW family.</text>
</comment>
<organism>
    <name type="scientific">Azotobacter vinelandii (strain DJ / ATCC BAA-1303)</name>
    <dbReference type="NCBI Taxonomy" id="322710"/>
    <lineage>
        <taxon>Bacteria</taxon>
        <taxon>Pseudomonadati</taxon>
        <taxon>Pseudomonadota</taxon>
        <taxon>Gammaproteobacteria</taxon>
        <taxon>Pseudomonadales</taxon>
        <taxon>Pseudomonadaceae</taxon>
        <taxon>Azotobacter</taxon>
    </lineage>
</organism>
<protein>
    <recommendedName>
        <fullName evidence="1">Nitrogenase-stabilizing/protective protein NifW</fullName>
    </recommendedName>
</protein>
<reference key="1">
    <citation type="journal article" date="2009" name="J. Bacteriol.">
        <title>Genome sequence of Azotobacter vinelandii, an obligate aerobe specialized to support diverse anaerobic metabolic processes.</title>
        <authorList>
            <person name="Setubal J.C."/>
            <person name="Dos Santos P."/>
            <person name="Goldman B.S."/>
            <person name="Ertesvaag H."/>
            <person name="Espin G."/>
            <person name="Rubio L.M."/>
            <person name="Valla S."/>
            <person name="Almeida N.F."/>
            <person name="Balasubramanian D."/>
            <person name="Cromes L."/>
            <person name="Curatti L."/>
            <person name="Du Z."/>
            <person name="Godsy E."/>
            <person name="Goodner B."/>
            <person name="Hellner-Burris K."/>
            <person name="Hernandez J.A."/>
            <person name="Houmiel K."/>
            <person name="Imperial J."/>
            <person name="Kennedy C."/>
            <person name="Larson T.J."/>
            <person name="Latreille P."/>
            <person name="Ligon L.S."/>
            <person name="Lu J."/>
            <person name="Maerk M."/>
            <person name="Miller N.M."/>
            <person name="Norton S."/>
            <person name="O'Carroll I.P."/>
            <person name="Paulsen I."/>
            <person name="Raulfs E.C."/>
            <person name="Roemer R."/>
            <person name="Rosser J."/>
            <person name="Segura D."/>
            <person name="Slater S."/>
            <person name="Stricklin S.L."/>
            <person name="Studholme D.J."/>
            <person name="Sun J."/>
            <person name="Viana C.J."/>
            <person name="Wallin E."/>
            <person name="Wang B."/>
            <person name="Wheeler C."/>
            <person name="Zhu H."/>
            <person name="Dean D.R."/>
            <person name="Dixon R."/>
            <person name="Wood D."/>
        </authorList>
    </citation>
    <scope>NUCLEOTIDE SEQUENCE [LARGE SCALE GENOMIC DNA]</scope>
    <source>
        <strain>DJ / ATCC BAA-1303</strain>
    </source>
</reference>